<keyword id="KW-0342">GTP-binding</keyword>
<keyword id="KW-0378">Hydrolase</keyword>
<keyword id="KW-0479">Metal-binding</keyword>
<keyword id="KW-0547">Nucleotide-binding</keyword>
<keyword id="KW-0554">One-carbon metabolism</keyword>
<keyword id="KW-1185">Reference proteome</keyword>
<keyword id="KW-0862">Zinc</keyword>
<comment type="catalytic activity">
    <reaction evidence="1">
        <text>GTP + H2O = 7,8-dihydroneopterin 3'-triphosphate + formate + H(+)</text>
        <dbReference type="Rhea" id="RHEA:17473"/>
        <dbReference type="ChEBI" id="CHEBI:15377"/>
        <dbReference type="ChEBI" id="CHEBI:15378"/>
        <dbReference type="ChEBI" id="CHEBI:15740"/>
        <dbReference type="ChEBI" id="CHEBI:37565"/>
        <dbReference type="ChEBI" id="CHEBI:58462"/>
        <dbReference type="EC" id="3.5.4.16"/>
    </reaction>
</comment>
<comment type="pathway">
    <text evidence="1">Cofactor biosynthesis; 7,8-dihydroneopterin triphosphate biosynthesis; 7,8-dihydroneopterin triphosphate from GTP: step 1/1.</text>
</comment>
<comment type="subunit">
    <text evidence="1">Homomer.</text>
</comment>
<comment type="similarity">
    <text evidence="1">Belongs to the GTP cyclohydrolase I family.</text>
</comment>
<evidence type="ECO:0000255" key="1">
    <source>
        <dbReference type="HAMAP-Rule" id="MF_00223"/>
    </source>
</evidence>
<accession>B0S1R1</accession>
<gene>
    <name evidence="1" type="primary">folE</name>
    <name type="ordered locus">FMG_0883</name>
</gene>
<sequence length="184" mass="20946">MDKEKIEQAVSMIIEAIGEDPNREGLLETPQRVARMYEEIFSGLNQDAKTHLSKSFEIVDDNMVIEKDIPFYSMCEHHLLPFWGKVNIAYIPNKRVAGLSKLARTVDVYSKKPQLQERLNIEIADALMEYLNCKGCLVTIEAEHMCMNMRGVKKPGTSTMTSVARGAFEEDLDLKNEAYRLMGL</sequence>
<dbReference type="EC" id="3.5.4.16" evidence="1"/>
<dbReference type="EMBL" id="AP008971">
    <property type="protein sequence ID" value="BAG08301.1"/>
    <property type="molecule type" value="Genomic_DNA"/>
</dbReference>
<dbReference type="RefSeq" id="WP_002839074.1">
    <property type="nucleotide sequence ID" value="NC_010376.1"/>
</dbReference>
<dbReference type="SMR" id="B0S1R1"/>
<dbReference type="STRING" id="334413.FMG_0883"/>
<dbReference type="KEGG" id="fma:FMG_0883"/>
<dbReference type="eggNOG" id="COG0302">
    <property type="taxonomic scope" value="Bacteria"/>
</dbReference>
<dbReference type="HOGENOM" id="CLU_049768_3_3_9"/>
<dbReference type="UniPathway" id="UPA00848">
    <property type="reaction ID" value="UER00151"/>
</dbReference>
<dbReference type="Proteomes" id="UP000001319">
    <property type="component" value="Chromosome"/>
</dbReference>
<dbReference type="GO" id="GO:0005737">
    <property type="term" value="C:cytoplasm"/>
    <property type="evidence" value="ECO:0007669"/>
    <property type="project" value="TreeGrafter"/>
</dbReference>
<dbReference type="GO" id="GO:0005525">
    <property type="term" value="F:GTP binding"/>
    <property type="evidence" value="ECO:0007669"/>
    <property type="project" value="UniProtKB-KW"/>
</dbReference>
<dbReference type="GO" id="GO:0003934">
    <property type="term" value="F:GTP cyclohydrolase I activity"/>
    <property type="evidence" value="ECO:0007669"/>
    <property type="project" value="UniProtKB-UniRule"/>
</dbReference>
<dbReference type="GO" id="GO:0008270">
    <property type="term" value="F:zinc ion binding"/>
    <property type="evidence" value="ECO:0007669"/>
    <property type="project" value="UniProtKB-UniRule"/>
</dbReference>
<dbReference type="GO" id="GO:0006730">
    <property type="term" value="P:one-carbon metabolic process"/>
    <property type="evidence" value="ECO:0007669"/>
    <property type="project" value="UniProtKB-UniRule"/>
</dbReference>
<dbReference type="GO" id="GO:0006729">
    <property type="term" value="P:tetrahydrobiopterin biosynthetic process"/>
    <property type="evidence" value="ECO:0007669"/>
    <property type="project" value="TreeGrafter"/>
</dbReference>
<dbReference type="GO" id="GO:0046654">
    <property type="term" value="P:tetrahydrofolate biosynthetic process"/>
    <property type="evidence" value="ECO:0007669"/>
    <property type="project" value="UniProtKB-UniRule"/>
</dbReference>
<dbReference type="CDD" id="cd00642">
    <property type="entry name" value="GTP_cyclohydro1"/>
    <property type="match status" value="1"/>
</dbReference>
<dbReference type="FunFam" id="1.10.286.10:FF:000001">
    <property type="entry name" value="GTP cyclohydrolase 1"/>
    <property type="match status" value="1"/>
</dbReference>
<dbReference type="FunFam" id="3.30.1130.10:FF:000001">
    <property type="entry name" value="GTP cyclohydrolase 1"/>
    <property type="match status" value="1"/>
</dbReference>
<dbReference type="Gene3D" id="1.10.286.10">
    <property type="match status" value="1"/>
</dbReference>
<dbReference type="Gene3D" id="3.30.1130.10">
    <property type="match status" value="1"/>
</dbReference>
<dbReference type="HAMAP" id="MF_00223">
    <property type="entry name" value="FolE"/>
    <property type="match status" value="1"/>
</dbReference>
<dbReference type="InterPro" id="IPR043133">
    <property type="entry name" value="GTP-CH-I_C/QueF"/>
</dbReference>
<dbReference type="InterPro" id="IPR043134">
    <property type="entry name" value="GTP-CH-I_N"/>
</dbReference>
<dbReference type="InterPro" id="IPR001474">
    <property type="entry name" value="GTP_CycHdrlase_I"/>
</dbReference>
<dbReference type="InterPro" id="IPR018234">
    <property type="entry name" value="GTP_CycHdrlase_I_CS"/>
</dbReference>
<dbReference type="InterPro" id="IPR020602">
    <property type="entry name" value="GTP_CycHdrlase_I_dom"/>
</dbReference>
<dbReference type="NCBIfam" id="TIGR00063">
    <property type="entry name" value="folE"/>
    <property type="match status" value="1"/>
</dbReference>
<dbReference type="NCBIfam" id="NF006825">
    <property type="entry name" value="PRK09347.1-2"/>
    <property type="match status" value="1"/>
</dbReference>
<dbReference type="NCBIfam" id="NF006826">
    <property type="entry name" value="PRK09347.1-3"/>
    <property type="match status" value="1"/>
</dbReference>
<dbReference type="PANTHER" id="PTHR11109:SF7">
    <property type="entry name" value="GTP CYCLOHYDROLASE 1"/>
    <property type="match status" value="1"/>
</dbReference>
<dbReference type="PANTHER" id="PTHR11109">
    <property type="entry name" value="GTP CYCLOHYDROLASE I"/>
    <property type="match status" value="1"/>
</dbReference>
<dbReference type="Pfam" id="PF01227">
    <property type="entry name" value="GTP_cyclohydroI"/>
    <property type="match status" value="1"/>
</dbReference>
<dbReference type="SUPFAM" id="SSF55620">
    <property type="entry name" value="Tetrahydrobiopterin biosynthesis enzymes-like"/>
    <property type="match status" value="1"/>
</dbReference>
<dbReference type="PROSITE" id="PS00859">
    <property type="entry name" value="GTP_CYCLOHYDROL_1_1"/>
    <property type="match status" value="1"/>
</dbReference>
<dbReference type="PROSITE" id="PS00860">
    <property type="entry name" value="GTP_CYCLOHYDROL_1_2"/>
    <property type="match status" value="1"/>
</dbReference>
<reference key="1">
    <citation type="journal article" date="2008" name="DNA Res.">
        <title>Complete genome sequence of Finegoldia magna, an anaerobic opportunistic pathogen.</title>
        <authorList>
            <person name="Goto T."/>
            <person name="Yamashita A."/>
            <person name="Hirakawa H."/>
            <person name="Matsutani M."/>
            <person name="Todo K."/>
            <person name="Ohshima K."/>
            <person name="Toh H."/>
            <person name="Miyamoto K."/>
            <person name="Kuhara S."/>
            <person name="Hattori M."/>
            <person name="Shimizu T."/>
            <person name="Akimoto S."/>
        </authorList>
    </citation>
    <scope>NUCLEOTIDE SEQUENCE [LARGE SCALE GENOMIC DNA]</scope>
    <source>
        <strain>ATCC 29328 / DSM 20472 / WAL 2508</strain>
    </source>
</reference>
<name>GCH1_FINM2</name>
<proteinExistence type="inferred from homology"/>
<feature type="chain" id="PRO_1000100174" description="GTP cyclohydrolase 1">
    <location>
        <begin position="1"/>
        <end position="184"/>
    </location>
</feature>
<feature type="binding site" evidence="1">
    <location>
        <position position="75"/>
    </location>
    <ligand>
        <name>Zn(2+)</name>
        <dbReference type="ChEBI" id="CHEBI:29105"/>
    </ligand>
</feature>
<feature type="binding site" evidence="1">
    <location>
        <position position="78"/>
    </location>
    <ligand>
        <name>Zn(2+)</name>
        <dbReference type="ChEBI" id="CHEBI:29105"/>
    </ligand>
</feature>
<feature type="binding site" evidence="1">
    <location>
        <position position="146"/>
    </location>
    <ligand>
        <name>Zn(2+)</name>
        <dbReference type="ChEBI" id="CHEBI:29105"/>
    </ligand>
</feature>
<protein>
    <recommendedName>
        <fullName evidence="1">GTP cyclohydrolase 1</fullName>
        <ecNumber evidence="1">3.5.4.16</ecNumber>
    </recommendedName>
    <alternativeName>
        <fullName evidence="1">GTP cyclohydrolase I</fullName>
        <shortName evidence="1">GTP-CH-I</shortName>
    </alternativeName>
</protein>
<organism>
    <name type="scientific">Finegoldia magna (strain ATCC 29328 / DSM 20472 / WAL 2508)</name>
    <name type="common">Peptostreptococcus magnus</name>
    <dbReference type="NCBI Taxonomy" id="334413"/>
    <lineage>
        <taxon>Bacteria</taxon>
        <taxon>Bacillati</taxon>
        <taxon>Bacillota</taxon>
        <taxon>Tissierellia</taxon>
        <taxon>Tissierellales</taxon>
        <taxon>Peptoniphilaceae</taxon>
        <taxon>Finegoldia</taxon>
    </lineage>
</organism>